<keyword id="KW-0997">Cell inner membrane</keyword>
<keyword id="KW-1003">Cell membrane</keyword>
<keyword id="KW-0472">Membrane</keyword>
<keyword id="KW-0812">Transmembrane</keyword>
<keyword id="KW-1133">Transmembrane helix</keyword>
<keyword id="KW-0813">Transport</keyword>
<organism>
    <name type="scientific">Salmonella paratyphi A (strain AKU_12601)</name>
    <dbReference type="NCBI Taxonomy" id="554290"/>
    <lineage>
        <taxon>Bacteria</taxon>
        <taxon>Pseudomonadati</taxon>
        <taxon>Pseudomonadota</taxon>
        <taxon>Gammaproteobacteria</taxon>
        <taxon>Enterobacterales</taxon>
        <taxon>Enterobacteriaceae</taxon>
        <taxon>Salmonella</taxon>
    </lineage>
</organism>
<sequence length="326" mass="34858">MLTFARQQQRRNVRWLLSLSLLVLLATLLSLCAGEQWIAPGDWLSARGELFVWQIRLPRTLAVLLVGAALALSGAVMQALFENPLAEPGLLGVSNGAGVGLIAAVLLGQGQLAGWALGLCAIAGALIITLILLRFARRHLSTSRLLLAGVALGIICSALMTWAIYFSTSFDLRQLMYWMMGGFGGVDWQQSWLMIALIPVLIWICCQSQPLNMLALGETSARQLGLPLWFWRNLLVVATGWMVGVSVAMAGAIGFIGLVIPHILRLCGLTDHRVLLPGCALAGAIALLLADVVARLALASAELPIGVVTATLGAPVFIWLLLKSAR</sequence>
<comment type="function">
    <text evidence="1">Part of the ABC transporter complex BtuCDF involved in vitamin B12 import. Involved in the translocation of the substrate across the membrane.</text>
</comment>
<comment type="subunit">
    <text evidence="1">The complex is composed of two ATP-binding proteins (BtuD), two transmembrane proteins (BtuC) and a solute-binding protein (BtuF).</text>
</comment>
<comment type="subcellular location">
    <subcellularLocation>
        <location evidence="1">Cell inner membrane</location>
        <topology evidence="1">Multi-pass membrane protein</topology>
    </subcellularLocation>
</comment>
<comment type="similarity">
    <text evidence="1">Belongs to the binding-protein-dependent transport system permease family. FecCD subfamily.</text>
</comment>
<feature type="chain" id="PRO_1000201557" description="Vitamin B12 import system permease protein BtuC">
    <location>
        <begin position="1"/>
        <end position="326"/>
    </location>
</feature>
<feature type="transmembrane region" description="Helical" evidence="1">
    <location>
        <begin position="15"/>
        <end position="35"/>
    </location>
</feature>
<feature type="transmembrane region" description="Helical" evidence="1">
    <location>
        <begin position="61"/>
        <end position="81"/>
    </location>
</feature>
<feature type="transmembrane region" description="Helical" evidence="1">
    <location>
        <begin position="88"/>
        <end position="108"/>
    </location>
</feature>
<feature type="transmembrane region" description="Helical" evidence="1">
    <location>
        <begin position="112"/>
        <end position="132"/>
    </location>
</feature>
<feature type="transmembrane region" description="Helical" evidence="1">
    <location>
        <begin position="146"/>
        <end position="166"/>
    </location>
</feature>
<feature type="transmembrane region" description="Helical" evidence="1">
    <location>
        <begin position="184"/>
        <end position="204"/>
    </location>
</feature>
<feature type="transmembrane region" description="Helical" evidence="1">
    <location>
        <begin position="240"/>
        <end position="260"/>
    </location>
</feature>
<feature type="transmembrane region" description="Helical" evidence="1">
    <location>
        <begin position="274"/>
        <end position="294"/>
    </location>
</feature>
<feature type="transmembrane region" description="Helical" evidence="1">
    <location>
        <begin position="302"/>
        <end position="322"/>
    </location>
</feature>
<accession>B5BA35</accession>
<reference key="1">
    <citation type="journal article" date="2009" name="BMC Genomics">
        <title>Pseudogene accumulation in the evolutionary histories of Salmonella enterica serovars Paratyphi A and Typhi.</title>
        <authorList>
            <person name="Holt K.E."/>
            <person name="Thomson N.R."/>
            <person name="Wain J."/>
            <person name="Langridge G.C."/>
            <person name="Hasan R."/>
            <person name="Bhutta Z.A."/>
            <person name="Quail M.A."/>
            <person name="Norbertczak H."/>
            <person name="Walker D."/>
            <person name="Simmonds M."/>
            <person name="White B."/>
            <person name="Bason N."/>
            <person name="Mungall K."/>
            <person name="Dougan G."/>
            <person name="Parkhill J."/>
        </authorList>
    </citation>
    <scope>NUCLEOTIDE SEQUENCE [LARGE SCALE GENOMIC DNA]</scope>
    <source>
        <strain>AKU_12601</strain>
    </source>
</reference>
<dbReference type="EMBL" id="FM200053">
    <property type="protein sequence ID" value="CAR59574.1"/>
    <property type="molecule type" value="Genomic_DNA"/>
</dbReference>
<dbReference type="RefSeq" id="WP_000954980.1">
    <property type="nucleotide sequence ID" value="NC_011147.1"/>
</dbReference>
<dbReference type="SMR" id="B5BA35"/>
<dbReference type="KEGG" id="sek:SSPA1395"/>
<dbReference type="HOGENOM" id="CLU_013016_0_3_6"/>
<dbReference type="Proteomes" id="UP000001869">
    <property type="component" value="Chromosome"/>
</dbReference>
<dbReference type="GO" id="GO:0005886">
    <property type="term" value="C:plasma membrane"/>
    <property type="evidence" value="ECO:0007669"/>
    <property type="project" value="UniProtKB-SubCell"/>
</dbReference>
<dbReference type="GO" id="GO:0090482">
    <property type="term" value="F:vitamin transmembrane transporter activity"/>
    <property type="evidence" value="ECO:0007669"/>
    <property type="project" value="UniProtKB-UniRule"/>
</dbReference>
<dbReference type="GO" id="GO:0015889">
    <property type="term" value="P:cobalamin transport"/>
    <property type="evidence" value="ECO:0007669"/>
    <property type="project" value="UniProtKB-UniRule"/>
</dbReference>
<dbReference type="CDD" id="cd06550">
    <property type="entry name" value="TM_ABC_iron-siderophores_like"/>
    <property type="match status" value="1"/>
</dbReference>
<dbReference type="FunFam" id="1.10.3470.10:FF:000001">
    <property type="entry name" value="Vitamin B12 ABC transporter permease BtuC"/>
    <property type="match status" value="1"/>
</dbReference>
<dbReference type="Gene3D" id="1.10.3470.10">
    <property type="entry name" value="ABC transporter involved in vitamin B12 uptake, BtuC"/>
    <property type="match status" value="1"/>
</dbReference>
<dbReference type="HAMAP" id="MF_01004">
    <property type="entry name" value="BtuC"/>
    <property type="match status" value="1"/>
</dbReference>
<dbReference type="InterPro" id="IPR037294">
    <property type="entry name" value="ABC_BtuC-like"/>
</dbReference>
<dbReference type="InterPro" id="IPR023691">
    <property type="entry name" value="ABC_transptr_BtuC"/>
</dbReference>
<dbReference type="InterPro" id="IPR000522">
    <property type="entry name" value="ABC_transptr_permease_BtuC"/>
</dbReference>
<dbReference type="NCBIfam" id="NF003001">
    <property type="entry name" value="PRK03784.1"/>
    <property type="match status" value="1"/>
</dbReference>
<dbReference type="PANTHER" id="PTHR30472">
    <property type="entry name" value="FERRIC ENTEROBACTIN TRANSPORT SYSTEM PERMEASE PROTEIN"/>
    <property type="match status" value="1"/>
</dbReference>
<dbReference type="PANTHER" id="PTHR30472:SF29">
    <property type="entry name" value="VITAMIN B12 IMPORT SYSTEM PERMEASE PROTEIN BTUC"/>
    <property type="match status" value="1"/>
</dbReference>
<dbReference type="Pfam" id="PF01032">
    <property type="entry name" value="FecCD"/>
    <property type="match status" value="1"/>
</dbReference>
<dbReference type="SUPFAM" id="SSF81345">
    <property type="entry name" value="ABC transporter involved in vitamin B12 uptake, BtuC"/>
    <property type="match status" value="1"/>
</dbReference>
<gene>
    <name evidence="1" type="primary">btuC</name>
    <name type="ordered locus">SSPA1395</name>
</gene>
<evidence type="ECO:0000255" key="1">
    <source>
        <dbReference type="HAMAP-Rule" id="MF_01004"/>
    </source>
</evidence>
<proteinExistence type="inferred from homology"/>
<name>BTUC_SALPK</name>
<protein>
    <recommendedName>
        <fullName evidence="1">Vitamin B12 import system permease protein BtuC</fullName>
    </recommendedName>
</protein>